<evidence type="ECO:0000255" key="1">
    <source>
        <dbReference type="HAMAP-Rule" id="MF_01634"/>
    </source>
</evidence>
<gene>
    <name evidence="1" type="primary">tgtA</name>
    <name type="ordered locus">MmarC6_0282</name>
</gene>
<reference key="1">
    <citation type="submission" date="2007-10" db="EMBL/GenBank/DDBJ databases">
        <title>Complete sequence of Methanococcus maripaludis C6.</title>
        <authorList>
            <consortium name="US DOE Joint Genome Institute"/>
            <person name="Copeland A."/>
            <person name="Lucas S."/>
            <person name="Lapidus A."/>
            <person name="Barry K."/>
            <person name="Glavina del Rio T."/>
            <person name="Dalin E."/>
            <person name="Tice H."/>
            <person name="Pitluck S."/>
            <person name="Clum A."/>
            <person name="Schmutz J."/>
            <person name="Larimer F."/>
            <person name="Land M."/>
            <person name="Hauser L."/>
            <person name="Kyrpides N."/>
            <person name="Mikhailova N."/>
            <person name="Sieprawska-Lupa M."/>
            <person name="Whitman W.B."/>
            <person name="Richardson P."/>
        </authorList>
    </citation>
    <scope>NUCLEOTIDE SEQUENCE [LARGE SCALE GENOMIC DNA]</scope>
    <source>
        <strain>C6 / ATCC BAA-1332</strain>
    </source>
</reference>
<sequence>MFEIKARDAMGRLGVITINGKKIETPTIMPVIHPNPKKQTVSMDLINKMADVVITNSYITYTTPELREIAETKGIHELIDFKNVVVTDSGSFQLSVYGDVNVGPMEIIDFQEKIGVDVGTILDIPTGPDVSREKAESDLLETFKRAEDSIKRRKEMGYKLALNGTIQGSKYLDLRQKSADVMGKMDFDIYPIGAVVPLMEDYRYREVAEVILNSKMHLPTNKPVHLFGCGHPMLFALSVALGCDLFDSAAYALYAKNGRYLTADGTLHLEDMKDLKNFPCTCKVCSEYTPKQLFNLEEKEKTRLLAEHNLYVTFEEIDRIKNAIKEGNLWELVEERCRSHPKLLNGLRVISKYMDFIEKHDPVSKKSGFFYTGYESMNRPEIYRHKQRLERIQYDKIYVTTVSENTSKPYHENLDNVPCDVDVLIKDSVFGLVPLNIDTMYPLAQNEVPDLYDFEKKYNNEFVSNFMEKNSEKILDISTYNYYINHYGTKKECDKINPDVFRVGKMLEYQYGAKILDDELMEKVKTRRSKNTGRIRNLLLEKEVLFTLRANDNFLIPAKSGAELLHEKLEFPKYRIVIDSSVEEYARAGKSVYSKFVKDCDPELRPFEEVLIVNSDDELLAYGTTILNGLELMEFDYGVAATLRGGLKK</sequence>
<feature type="chain" id="PRO_1000186651" description="tRNA-guanine(15) transglycosylase">
    <location>
        <begin position="1"/>
        <end position="649"/>
    </location>
</feature>
<feature type="domain" description="PUA" evidence="1">
    <location>
        <begin position="573"/>
        <end position="648"/>
    </location>
</feature>
<feature type="active site" description="Nucleophile" evidence="1">
    <location>
        <position position="88"/>
    </location>
</feature>
<feature type="binding site" evidence="1">
    <location>
        <position position="123"/>
    </location>
    <ligand>
        <name>substrate</name>
    </ligand>
</feature>
<feature type="binding site" evidence="1">
    <location>
        <position position="194"/>
    </location>
    <ligand>
        <name>substrate</name>
    </ligand>
</feature>
<feature type="binding site" evidence="1">
    <location>
        <position position="280"/>
    </location>
    <ligand>
        <name>Zn(2+)</name>
        <dbReference type="ChEBI" id="CHEBI:29105"/>
    </ligand>
</feature>
<feature type="binding site" evidence="1">
    <location>
        <position position="282"/>
    </location>
    <ligand>
        <name>Zn(2+)</name>
        <dbReference type="ChEBI" id="CHEBI:29105"/>
    </ligand>
</feature>
<feature type="binding site" evidence="1">
    <location>
        <position position="285"/>
    </location>
    <ligand>
        <name>Zn(2+)</name>
        <dbReference type="ChEBI" id="CHEBI:29105"/>
    </ligand>
</feature>
<name>ATGT_METM6</name>
<comment type="function">
    <text evidence="1">Exchanges the guanine residue with 7-cyano-7-deazaguanine (preQ0) at position 15 in the dihydrouridine loop (D-loop) of archaeal tRNAs.</text>
</comment>
<comment type="catalytic activity">
    <reaction evidence="1">
        <text>guanosine(15) in tRNA + 7-cyano-7-deazaguanine = 7-cyano-7-carbaguanosine(15) in tRNA + guanine</text>
        <dbReference type="Rhea" id="RHEA:43164"/>
        <dbReference type="Rhea" id="RHEA-COMP:10371"/>
        <dbReference type="Rhea" id="RHEA-COMP:10372"/>
        <dbReference type="ChEBI" id="CHEBI:16235"/>
        <dbReference type="ChEBI" id="CHEBI:45075"/>
        <dbReference type="ChEBI" id="CHEBI:74269"/>
        <dbReference type="ChEBI" id="CHEBI:82850"/>
        <dbReference type="EC" id="2.4.2.48"/>
    </reaction>
</comment>
<comment type="cofactor">
    <cofactor evidence="1">
        <name>Zn(2+)</name>
        <dbReference type="ChEBI" id="CHEBI:29105"/>
    </cofactor>
    <text evidence="1">Binds 1 zinc ion per subunit.</text>
</comment>
<comment type="pathway">
    <text evidence="1">tRNA modification; archaeosine-tRNA biosynthesis.</text>
</comment>
<comment type="similarity">
    <text evidence="1">Belongs to the archaeosine tRNA-ribosyltransferase family.</text>
</comment>
<protein>
    <recommendedName>
        <fullName evidence="1">tRNA-guanine(15) transglycosylase</fullName>
        <ecNumber evidence="1">2.4.2.48</ecNumber>
    </recommendedName>
    <alternativeName>
        <fullName evidence="1">7-cyano-7-deazaguanine tRNA-ribosyltransferase</fullName>
    </alternativeName>
    <alternativeName>
        <fullName evidence="1">Archaeal tRNA-guanine transglycosylase</fullName>
    </alternativeName>
</protein>
<dbReference type="EC" id="2.4.2.48" evidence="1"/>
<dbReference type="EMBL" id="CP000867">
    <property type="protein sequence ID" value="ABX01103.1"/>
    <property type="molecule type" value="Genomic_DNA"/>
</dbReference>
<dbReference type="SMR" id="A9A6B5"/>
<dbReference type="STRING" id="444158.MmarC6_0282"/>
<dbReference type="KEGG" id="mmx:MmarC6_0282"/>
<dbReference type="eggNOG" id="arCOG00989">
    <property type="taxonomic scope" value="Archaea"/>
</dbReference>
<dbReference type="eggNOG" id="arCOG00991">
    <property type="taxonomic scope" value="Archaea"/>
</dbReference>
<dbReference type="HOGENOM" id="CLU_030083_0_0_2"/>
<dbReference type="OrthoDB" id="6871at2157"/>
<dbReference type="PhylomeDB" id="A9A6B5"/>
<dbReference type="UniPathway" id="UPA00393"/>
<dbReference type="GO" id="GO:0005737">
    <property type="term" value="C:cytoplasm"/>
    <property type="evidence" value="ECO:0007669"/>
    <property type="project" value="TreeGrafter"/>
</dbReference>
<dbReference type="GO" id="GO:0016763">
    <property type="term" value="F:pentosyltransferase activity"/>
    <property type="evidence" value="ECO:0007669"/>
    <property type="project" value="UniProtKB-UniRule"/>
</dbReference>
<dbReference type="GO" id="GO:0003723">
    <property type="term" value="F:RNA binding"/>
    <property type="evidence" value="ECO:0007669"/>
    <property type="project" value="InterPro"/>
</dbReference>
<dbReference type="GO" id="GO:0008270">
    <property type="term" value="F:zinc ion binding"/>
    <property type="evidence" value="ECO:0007669"/>
    <property type="project" value="UniProtKB-UniRule"/>
</dbReference>
<dbReference type="GO" id="GO:0002099">
    <property type="term" value="P:tRNA wobble guanine modification"/>
    <property type="evidence" value="ECO:0007669"/>
    <property type="project" value="TreeGrafter"/>
</dbReference>
<dbReference type="CDD" id="cd21149">
    <property type="entry name" value="PUA_archaeosine_TGT"/>
    <property type="match status" value="1"/>
</dbReference>
<dbReference type="Gene3D" id="3.90.1020.10">
    <property type="entry name" value="ArcTGT, C1 domain"/>
    <property type="match status" value="1"/>
</dbReference>
<dbReference type="Gene3D" id="3.10.450.90">
    <property type="entry name" value="ArcTGT, C2 domain"/>
    <property type="match status" value="1"/>
</dbReference>
<dbReference type="Gene3D" id="2.30.130.10">
    <property type="entry name" value="PUA domain"/>
    <property type="match status" value="1"/>
</dbReference>
<dbReference type="Gene3D" id="3.20.20.105">
    <property type="entry name" value="Queuine tRNA-ribosyltransferase-like"/>
    <property type="match status" value="1"/>
</dbReference>
<dbReference type="HAMAP" id="MF_01634">
    <property type="entry name" value="TgtA_arch"/>
    <property type="match status" value="1"/>
</dbReference>
<dbReference type="InterPro" id="IPR050076">
    <property type="entry name" value="ArchSynthase1/Queuine_TRR"/>
</dbReference>
<dbReference type="InterPro" id="IPR038370">
    <property type="entry name" value="ArcTGT_C1_sf"/>
</dbReference>
<dbReference type="InterPro" id="IPR002478">
    <property type="entry name" value="PUA"/>
</dbReference>
<dbReference type="InterPro" id="IPR015947">
    <property type="entry name" value="PUA-like_sf"/>
</dbReference>
<dbReference type="InterPro" id="IPR036974">
    <property type="entry name" value="PUA_sf"/>
</dbReference>
<dbReference type="InterPro" id="IPR036511">
    <property type="entry name" value="TGT-like_sf"/>
</dbReference>
<dbReference type="InterPro" id="IPR029402">
    <property type="entry name" value="TGT_C2"/>
</dbReference>
<dbReference type="InterPro" id="IPR038250">
    <property type="entry name" value="TGT_C2_sf"/>
</dbReference>
<dbReference type="InterPro" id="IPR004804">
    <property type="entry name" value="TgtA"/>
</dbReference>
<dbReference type="InterPro" id="IPR002616">
    <property type="entry name" value="tRNA_ribo_trans-like"/>
</dbReference>
<dbReference type="NCBIfam" id="TIGR00432">
    <property type="entry name" value="arcsn_tRNA_tgt"/>
    <property type="match status" value="1"/>
</dbReference>
<dbReference type="NCBIfam" id="TIGR00449">
    <property type="entry name" value="tgt_general"/>
    <property type="match status" value="1"/>
</dbReference>
<dbReference type="PANTHER" id="PTHR46499">
    <property type="entry name" value="QUEUINE TRNA-RIBOSYLTRANSFERASE"/>
    <property type="match status" value="1"/>
</dbReference>
<dbReference type="PANTHER" id="PTHR46499:SF1">
    <property type="entry name" value="QUEUINE TRNA-RIBOSYLTRANSFERASE"/>
    <property type="match status" value="1"/>
</dbReference>
<dbReference type="Pfam" id="PF01472">
    <property type="entry name" value="PUA"/>
    <property type="match status" value="1"/>
</dbReference>
<dbReference type="Pfam" id="PF01702">
    <property type="entry name" value="TGT"/>
    <property type="match status" value="1"/>
</dbReference>
<dbReference type="Pfam" id="PF14810">
    <property type="entry name" value="TGT_C2"/>
    <property type="match status" value="1"/>
</dbReference>
<dbReference type="SMART" id="SM00359">
    <property type="entry name" value="PUA"/>
    <property type="match status" value="1"/>
</dbReference>
<dbReference type="SUPFAM" id="SSF88802">
    <property type="entry name" value="Pre-PUA domain"/>
    <property type="match status" value="1"/>
</dbReference>
<dbReference type="SUPFAM" id="SSF88697">
    <property type="entry name" value="PUA domain-like"/>
    <property type="match status" value="1"/>
</dbReference>
<dbReference type="SUPFAM" id="SSF51713">
    <property type="entry name" value="tRNA-guanine transglycosylase"/>
    <property type="match status" value="1"/>
</dbReference>
<dbReference type="PROSITE" id="PS50890">
    <property type="entry name" value="PUA"/>
    <property type="match status" value="1"/>
</dbReference>
<organism>
    <name type="scientific">Methanococcus maripaludis (strain C6 / ATCC BAA-1332)</name>
    <dbReference type="NCBI Taxonomy" id="444158"/>
    <lineage>
        <taxon>Archaea</taxon>
        <taxon>Methanobacteriati</taxon>
        <taxon>Methanobacteriota</taxon>
        <taxon>Methanomada group</taxon>
        <taxon>Methanococci</taxon>
        <taxon>Methanococcales</taxon>
        <taxon>Methanococcaceae</taxon>
        <taxon>Methanococcus</taxon>
    </lineage>
</organism>
<proteinExistence type="inferred from homology"/>
<keyword id="KW-0328">Glycosyltransferase</keyword>
<keyword id="KW-0479">Metal-binding</keyword>
<keyword id="KW-0808">Transferase</keyword>
<keyword id="KW-0819">tRNA processing</keyword>
<keyword id="KW-0862">Zinc</keyword>
<accession>A9A6B5</accession>